<accession>C5CXR6</accession>
<reference key="1">
    <citation type="journal article" date="2011" name="J. Bacteriol.">
        <title>Complete genome sequence of the metabolically versatile plant growth-promoting endophyte, Variovorax paradoxus S110.</title>
        <authorList>
            <person name="Han J.I."/>
            <person name="Choi H.K."/>
            <person name="Lee S.W."/>
            <person name="Orwin P.M."/>
            <person name="Kim J."/>
            <person name="Laroe S.L."/>
            <person name="Kim T.G."/>
            <person name="O'Neil J."/>
            <person name="Leadbetter J.R."/>
            <person name="Lee S.Y."/>
            <person name="Hur C.G."/>
            <person name="Spain J.C."/>
            <person name="Ovchinnikova G."/>
            <person name="Goodwin L."/>
            <person name="Han C."/>
        </authorList>
    </citation>
    <scope>NUCLEOTIDE SEQUENCE [LARGE SCALE GENOMIC DNA]</scope>
    <source>
        <strain>S110</strain>
    </source>
</reference>
<organism>
    <name type="scientific">Variovorax paradoxus (strain S110)</name>
    <dbReference type="NCBI Taxonomy" id="543728"/>
    <lineage>
        <taxon>Bacteria</taxon>
        <taxon>Pseudomonadati</taxon>
        <taxon>Pseudomonadota</taxon>
        <taxon>Betaproteobacteria</taxon>
        <taxon>Burkholderiales</taxon>
        <taxon>Comamonadaceae</taxon>
        <taxon>Variovorax</taxon>
    </lineage>
</organism>
<feature type="chain" id="PRO_0000406767" description="Flagellar transcriptional regulator FlhC">
    <location>
        <begin position="1"/>
        <end position="202"/>
    </location>
</feature>
<feature type="binding site" evidence="1">
    <location>
        <position position="137"/>
    </location>
    <ligand>
        <name>Zn(2+)</name>
        <dbReference type="ChEBI" id="CHEBI:29105"/>
    </ligand>
</feature>
<feature type="binding site" evidence="1">
    <location>
        <position position="140"/>
    </location>
    <ligand>
        <name>Zn(2+)</name>
        <dbReference type="ChEBI" id="CHEBI:29105"/>
    </ligand>
</feature>
<feature type="binding site" evidence="1">
    <location>
        <position position="157"/>
    </location>
    <ligand>
        <name>Zn(2+)</name>
        <dbReference type="ChEBI" id="CHEBI:29105"/>
    </ligand>
</feature>
<feature type="binding site" evidence="1">
    <location>
        <position position="160"/>
    </location>
    <ligand>
        <name>Zn(2+)</name>
        <dbReference type="ChEBI" id="CHEBI:29105"/>
    </ligand>
</feature>
<proteinExistence type="inferred from homology"/>
<comment type="function">
    <text evidence="1">Functions in complex with FlhD as a master transcriptional regulator that regulates transcription of several flagellar and non-flagellar operons by binding to their promoter region. Activates expression of class 2 flagellar genes, including fliA, which is a flagellum-specific sigma factor that turns on the class 3 genes. Also regulates genes whose products function in a variety of physiological pathways.</text>
</comment>
<comment type="cofactor">
    <cofactor evidence="1">
        <name>Zn(2+)</name>
        <dbReference type="ChEBI" id="CHEBI:29105"/>
    </cofactor>
    <text evidence="1">Binds 1 zinc ion per subunit.</text>
</comment>
<comment type="subunit">
    <text evidence="1">Heterohexamer composed of two FlhC and four FlhD subunits. Each FlhC binds a FlhD dimer, forming a heterotrimer, and a hexamer assembles by dimerization of two heterotrimers.</text>
</comment>
<comment type="subcellular location">
    <subcellularLocation>
        <location evidence="1">Cytoplasm</location>
    </subcellularLocation>
</comment>
<comment type="similarity">
    <text evidence="1">Belongs to the FlhC family.</text>
</comment>
<keyword id="KW-0010">Activator</keyword>
<keyword id="KW-1005">Bacterial flagellum biogenesis</keyword>
<keyword id="KW-0963">Cytoplasm</keyword>
<keyword id="KW-0238">DNA-binding</keyword>
<keyword id="KW-0479">Metal-binding</keyword>
<keyword id="KW-0804">Transcription</keyword>
<keyword id="KW-0805">Transcription regulation</keyword>
<keyword id="KW-0862">Zinc</keyword>
<protein>
    <recommendedName>
        <fullName evidence="1">Flagellar transcriptional regulator FlhC</fullName>
    </recommendedName>
</protein>
<sequence>MTRKSVLGEVREVQLAIQLIQLGARLQFLESEVGLSRERLIRLYKEIKGVSPPKGLLPFSTDWYMTWLANIHSSMFYNMYQFMKIHSDEEKVWILIKSYKLYLQQIAAQDSEPILDFTRAYTMVRFFDSDMLQLSTCCRCSGQFVAHAHDHKSGYVCVLCRPPSRAGKARGAKRGAEGEAGALGIEGMGFGVEAAPGGAGFH</sequence>
<name>FLHC_VARPS</name>
<dbReference type="EMBL" id="CP001635">
    <property type="protein sequence ID" value="ACS20772.1"/>
    <property type="molecule type" value="Genomic_DNA"/>
</dbReference>
<dbReference type="SMR" id="C5CXR6"/>
<dbReference type="STRING" id="543728.Vapar_4159"/>
<dbReference type="KEGG" id="vap:Vapar_4159"/>
<dbReference type="eggNOG" id="ENOG502Z927">
    <property type="taxonomic scope" value="Bacteria"/>
</dbReference>
<dbReference type="HOGENOM" id="CLU_122824_0_0_4"/>
<dbReference type="OrthoDB" id="5570801at2"/>
<dbReference type="GO" id="GO:0005737">
    <property type="term" value="C:cytoplasm"/>
    <property type="evidence" value="ECO:0007669"/>
    <property type="project" value="UniProtKB-SubCell"/>
</dbReference>
<dbReference type="GO" id="GO:0003677">
    <property type="term" value="F:DNA binding"/>
    <property type="evidence" value="ECO:0007669"/>
    <property type="project" value="UniProtKB-UniRule"/>
</dbReference>
<dbReference type="GO" id="GO:0008270">
    <property type="term" value="F:zinc ion binding"/>
    <property type="evidence" value="ECO:0007669"/>
    <property type="project" value="UniProtKB-UniRule"/>
</dbReference>
<dbReference type="GO" id="GO:0044781">
    <property type="term" value="P:bacterial-type flagellum organization"/>
    <property type="evidence" value="ECO:0007669"/>
    <property type="project" value="UniProtKB-KW"/>
</dbReference>
<dbReference type="GO" id="GO:0045893">
    <property type="term" value="P:positive regulation of DNA-templated transcription"/>
    <property type="evidence" value="ECO:0007669"/>
    <property type="project" value="InterPro"/>
</dbReference>
<dbReference type="GO" id="GO:1902208">
    <property type="term" value="P:regulation of bacterial-type flagellum assembly"/>
    <property type="evidence" value="ECO:0007669"/>
    <property type="project" value="UniProtKB-UniRule"/>
</dbReference>
<dbReference type="HAMAP" id="MF_01891">
    <property type="entry name" value="FhlC"/>
    <property type="match status" value="1"/>
</dbReference>
<dbReference type="InterPro" id="IPR007944">
    <property type="entry name" value="FlhC"/>
</dbReference>
<dbReference type="NCBIfam" id="NF009365">
    <property type="entry name" value="PRK12722.1"/>
    <property type="match status" value="1"/>
</dbReference>
<dbReference type="Pfam" id="PF05280">
    <property type="entry name" value="FlhC"/>
    <property type="match status" value="1"/>
</dbReference>
<dbReference type="PIRSF" id="PIRSF003159">
    <property type="entry name" value="FlhC"/>
    <property type="match status" value="1"/>
</dbReference>
<dbReference type="SUPFAM" id="SSF160930">
    <property type="entry name" value="FlhC-like"/>
    <property type="match status" value="1"/>
</dbReference>
<evidence type="ECO:0000255" key="1">
    <source>
        <dbReference type="HAMAP-Rule" id="MF_01891"/>
    </source>
</evidence>
<gene>
    <name evidence="1" type="primary">flhC</name>
    <name type="ordered locus">Vapar_4159</name>
</gene>